<keyword id="KW-0143">Chaperone</keyword>
<keyword id="KW-0963">Cytoplasm</keyword>
<keyword id="KW-0227">DNA damage</keyword>
<keyword id="KW-0234">DNA repair</keyword>
<keyword id="KW-1185">Reference proteome</keyword>
<feature type="chain" id="PRO_0000301760" description="DNA mismatch repair protein HSM3">
    <location>
        <begin position="1"/>
        <end position="497"/>
    </location>
</feature>
<dbReference type="EMBL" id="CP000500">
    <property type="protein sequence ID" value="ABN67941.2"/>
    <property type="molecule type" value="Genomic_DNA"/>
</dbReference>
<dbReference type="RefSeq" id="XP_001385970.2">
    <property type="nucleotide sequence ID" value="XM_001385933.1"/>
</dbReference>
<dbReference type="SMR" id="A3LY92"/>
<dbReference type="FunCoup" id="A3LY92">
    <property type="interactions" value="121"/>
</dbReference>
<dbReference type="STRING" id="322104.A3LY92"/>
<dbReference type="GeneID" id="4840403"/>
<dbReference type="KEGG" id="pic:PICST_62139"/>
<dbReference type="eggNOG" id="ENOG502QWEK">
    <property type="taxonomic scope" value="Eukaryota"/>
</dbReference>
<dbReference type="HOGENOM" id="CLU_577450_0_0_1"/>
<dbReference type="InParanoid" id="A3LY92"/>
<dbReference type="OMA" id="YMEQMVL"/>
<dbReference type="OrthoDB" id="4074002at2759"/>
<dbReference type="Proteomes" id="UP000002258">
    <property type="component" value="Chromosome 6"/>
</dbReference>
<dbReference type="GO" id="GO:0005737">
    <property type="term" value="C:cytoplasm"/>
    <property type="evidence" value="ECO:0007669"/>
    <property type="project" value="UniProtKB-SubCell"/>
</dbReference>
<dbReference type="GO" id="GO:0006281">
    <property type="term" value="P:DNA repair"/>
    <property type="evidence" value="ECO:0007669"/>
    <property type="project" value="UniProtKB-KW"/>
</dbReference>
<dbReference type="CDD" id="cd12794">
    <property type="entry name" value="Hsm3_like"/>
    <property type="match status" value="1"/>
</dbReference>
<dbReference type="Gene3D" id="1.25.10.50">
    <property type="match status" value="1"/>
</dbReference>
<dbReference type="Gene3D" id="1.25.40.580">
    <property type="match status" value="1"/>
</dbReference>
<dbReference type="InterPro" id="IPR040752">
    <property type="entry name" value="HSM3_C"/>
</dbReference>
<dbReference type="InterPro" id="IPR041335">
    <property type="entry name" value="HSM3_N"/>
</dbReference>
<dbReference type="Pfam" id="PF18794">
    <property type="entry name" value="HSM3_C"/>
    <property type="match status" value="1"/>
</dbReference>
<dbReference type="Pfam" id="PF18795">
    <property type="entry name" value="HSM3_N"/>
    <property type="match status" value="1"/>
</dbReference>
<comment type="function">
    <text evidence="1">Involved in DNA mismatch repair in slow-growing cells. Acts as a chaperone during the assembly of the 26S proteasome, specifically of the base subcomplex of the 19S regulatory complex (RC) (By similarity).</text>
</comment>
<comment type="subcellular location">
    <subcellularLocation>
        <location evidence="1">Cytoplasm</location>
    </subcellularLocation>
</comment>
<comment type="similarity">
    <text evidence="2">Belongs to the proteasome subunit S5B/HSM3 family.</text>
</comment>
<accession>A3LY92</accession>
<gene>
    <name type="primary">HSM3</name>
    <name type="ORF">PICST_62139</name>
</gene>
<proteinExistence type="inferred from homology"/>
<organism>
    <name type="scientific">Scheffersomyces stipitis (strain ATCC 58785 / CBS 6054 / NBRC 10063 / NRRL Y-11545)</name>
    <name type="common">Yeast</name>
    <name type="synonym">Pichia stipitis</name>
    <dbReference type="NCBI Taxonomy" id="322104"/>
    <lineage>
        <taxon>Eukaryota</taxon>
        <taxon>Fungi</taxon>
        <taxon>Dikarya</taxon>
        <taxon>Ascomycota</taxon>
        <taxon>Saccharomycotina</taxon>
        <taxon>Pichiomycetes</taxon>
        <taxon>Debaryomycetaceae</taxon>
        <taxon>Scheffersomyces</taxon>
    </lineage>
</organism>
<name>HSM3_PICST</name>
<sequence length="497" mass="56712">MPAPATTTSVDEQTLSVIDHLTKSYDNKSEIDSTLIDDYITVLGSIDLLGAIADFIPIINHILTDNLYHQIDPNRLLIELLQKIVSRLSFGQIVSVYSPEFIVSSLASSDNVPITKLCLSIIIQKLHEPETVSFIAENCISFILLKNYLSDAKLDLGIVNQIELYVNSLILNDVTNLLEEILTDTKFVILYNSIRNSENTILLARLLDFILILLTYKVDLPLDPRLYTFSNVEIVTFKDDPLFLILLVQFYVKLVQFSVLEEVSPVIGNFVNLYKDPTTDDFVKVEVIDILVKLSYATNSLLIEYGLELALNSELFKSHNLIKVYEYNEPDIKLLSNVNPDLIVHSSNVIYEDVLSNLSLLNNKQYFPILLNFIGSTDVFPRLEQDYFTTKLKHLPADKLYVILLEFSKFSHSRKFLLSNATLTNDYLLDNDNLTFVNNELWHTKLQVLENLVNATDSDSPELAHWKPYLQDSFNLMRHGKKIRDVVPQVSILDETL</sequence>
<protein>
    <recommendedName>
        <fullName>DNA mismatch repair protein HSM3</fullName>
    </recommendedName>
</protein>
<reference key="1">
    <citation type="journal article" date="2007" name="Nat. Biotechnol.">
        <title>Genome sequence of the lignocellulose-bioconverting and xylose-fermenting yeast Pichia stipitis.</title>
        <authorList>
            <person name="Jeffries T.W."/>
            <person name="Grigoriev I.V."/>
            <person name="Grimwood J."/>
            <person name="Laplaza J.M."/>
            <person name="Aerts A."/>
            <person name="Salamov A."/>
            <person name="Schmutz J."/>
            <person name="Lindquist E."/>
            <person name="Dehal P."/>
            <person name="Shapiro H."/>
            <person name="Jin Y.-S."/>
            <person name="Passoth V."/>
            <person name="Richardson P.M."/>
        </authorList>
    </citation>
    <scope>NUCLEOTIDE SEQUENCE [LARGE SCALE GENOMIC DNA]</scope>
    <source>
        <strain>ATCC 58785 / CBS 6054 / NBRC 10063 / NRRL Y-11545</strain>
    </source>
</reference>
<evidence type="ECO:0000250" key="1"/>
<evidence type="ECO:0000305" key="2"/>